<evidence type="ECO:0000255" key="1">
    <source>
        <dbReference type="PROSITE-ProRule" id="PRU00159"/>
    </source>
</evidence>
<evidence type="ECO:0000269" key="2">
    <source>
    </source>
</evidence>
<evidence type="ECO:0000269" key="3">
    <source>
    </source>
</evidence>
<evidence type="ECO:0000303" key="4">
    <source>
    </source>
</evidence>
<evidence type="ECO:0000305" key="5"/>
<evidence type="ECO:0000305" key="6">
    <source>
    </source>
</evidence>
<evidence type="ECO:0000312" key="7">
    <source>
        <dbReference type="Araport" id="AT1G01740"/>
    </source>
</evidence>
<evidence type="ECO:0000312" key="8">
    <source>
        <dbReference type="EMBL" id="AAF78407.1"/>
    </source>
</evidence>
<reference key="1">
    <citation type="journal article" date="2000" name="Nature">
        <title>Sequence and analysis of chromosome 1 of the plant Arabidopsis thaliana.</title>
        <authorList>
            <person name="Theologis A."/>
            <person name="Ecker J.R."/>
            <person name="Palm C.J."/>
            <person name="Federspiel N.A."/>
            <person name="Kaul S."/>
            <person name="White O."/>
            <person name="Alonso J."/>
            <person name="Altafi H."/>
            <person name="Araujo R."/>
            <person name="Bowman C.L."/>
            <person name="Brooks S.Y."/>
            <person name="Buehler E."/>
            <person name="Chan A."/>
            <person name="Chao Q."/>
            <person name="Chen H."/>
            <person name="Cheuk R.F."/>
            <person name="Chin C.W."/>
            <person name="Chung M.K."/>
            <person name="Conn L."/>
            <person name="Conway A.B."/>
            <person name="Conway A.R."/>
            <person name="Creasy T.H."/>
            <person name="Dewar K."/>
            <person name="Dunn P."/>
            <person name="Etgu P."/>
            <person name="Feldblyum T.V."/>
            <person name="Feng J.-D."/>
            <person name="Fong B."/>
            <person name="Fujii C.Y."/>
            <person name="Gill J.E."/>
            <person name="Goldsmith A.D."/>
            <person name="Haas B."/>
            <person name="Hansen N.F."/>
            <person name="Hughes B."/>
            <person name="Huizar L."/>
            <person name="Hunter J.L."/>
            <person name="Jenkins J."/>
            <person name="Johnson-Hopson C."/>
            <person name="Khan S."/>
            <person name="Khaykin E."/>
            <person name="Kim C.J."/>
            <person name="Koo H.L."/>
            <person name="Kremenetskaia I."/>
            <person name="Kurtz D.B."/>
            <person name="Kwan A."/>
            <person name="Lam B."/>
            <person name="Langin-Hooper S."/>
            <person name="Lee A."/>
            <person name="Lee J.M."/>
            <person name="Lenz C.A."/>
            <person name="Li J.H."/>
            <person name="Li Y.-P."/>
            <person name="Lin X."/>
            <person name="Liu S.X."/>
            <person name="Liu Z.A."/>
            <person name="Luros J.S."/>
            <person name="Maiti R."/>
            <person name="Marziali A."/>
            <person name="Militscher J."/>
            <person name="Miranda M."/>
            <person name="Nguyen M."/>
            <person name="Nierman W.C."/>
            <person name="Osborne B.I."/>
            <person name="Pai G."/>
            <person name="Peterson J."/>
            <person name="Pham P.K."/>
            <person name="Rizzo M."/>
            <person name="Rooney T."/>
            <person name="Rowley D."/>
            <person name="Sakano H."/>
            <person name="Salzberg S.L."/>
            <person name="Schwartz J.R."/>
            <person name="Shinn P."/>
            <person name="Southwick A.M."/>
            <person name="Sun H."/>
            <person name="Tallon L.J."/>
            <person name="Tambunga G."/>
            <person name="Toriumi M.J."/>
            <person name="Town C.D."/>
            <person name="Utterback T."/>
            <person name="Van Aken S."/>
            <person name="Vaysberg M."/>
            <person name="Vysotskaia V.S."/>
            <person name="Walker M."/>
            <person name="Wu D."/>
            <person name="Yu G."/>
            <person name="Fraser C.M."/>
            <person name="Venter J.C."/>
            <person name="Davis R.W."/>
        </authorList>
    </citation>
    <scope>NUCLEOTIDE SEQUENCE [LARGE SCALE GENOMIC DNA]</scope>
    <source>
        <strain>cv. Columbia</strain>
    </source>
</reference>
<reference key="2">
    <citation type="journal article" date="2017" name="Plant J.">
        <title>Araport11: a complete reannotation of the Arabidopsis thaliana reference genome.</title>
        <authorList>
            <person name="Cheng C.Y."/>
            <person name="Krishnakumar V."/>
            <person name="Chan A.P."/>
            <person name="Thibaud-Nissen F."/>
            <person name="Schobel S."/>
            <person name="Town C.D."/>
        </authorList>
    </citation>
    <scope>GENOME REANNOTATION</scope>
    <source>
        <strain>cv. Columbia</strain>
    </source>
</reference>
<reference key="3">
    <citation type="journal article" date="2003" name="J. Biol. Chem.">
        <title>Unexpected protein families including cell defense components feature in the N-myristoylome of a higher eukaryote.</title>
        <authorList>
            <person name="Boisson B."/>
            <person name="Giglione C."/>
            <person name="Meinnel T."/>
        </authorList>
    </citation>
    <scope>MYRISTOYLATION AT GLY-2</scope>
</reference>
<reference key="4">
    <citation type="journal article" date="2013" name="Plant J.">
        <title>BSKs are partially redundant positive regulators of brassinosteroid signaling in Arabidopsis.</title>
        <authorList>
            <person name="Sreeramulu S."/>
            <person name="Mostizky Y."/>
            <person name="Sunitha S."/>
            <person name="Shani E."/>
            <person name="Nahum H."/>
            <person name="Salomon D."/>
            <person name="Hayun L.B."/>
            <person name="Gruetter C."/>
            <person name="Rauh D."/>
            <person name="Ori N."/>
            <person name="Sessa G."/>
        </authorList>
    </citation>
    <scope>FUNCTION</scope>
</reference>
<comment type="function">
    <text evidence="3">Probable serine/threonine kinase that acts as a positive regulator of brassinosteroid (BR) signaling downstream of the receptor kinase BRI1. Functions redundantly with BSK3, BSK6, BSK7 and BSK8.</text>
</comment>
<comment type="catalytic activity">
    <reaction evidence="5">
        <text>L-seryl-[protein] + ATP = O-phospho-L-seryl-[protein] + ADP + H(+)</text>
        <dbReference type="Rhea" id="RHEA:17989"/>
        <dbReference type="Rhea" id="RHEA-COMP:9863"/>
        <dbReference type="Rhea" id="RHEA-COMP:11604"/>
        <dbReference type="ChEBI" id="CHEBI:15378"/>
        <dbReference type="ChEBI" id="CHEBI:29999"/>
        <dbReference type="ChEBI" id="CHEBI:30616"/>
        <dbReference type="ChEBI" id="CHEBI:83421"/>
        <dbReference type="ChEBI" id="CHEBI:456216"/>
        <dbReference type="EC" id="2.7.11.1"/>
    </reaction>
</comment>
<comment type="catalytic activity">
    <reaction evidence="5">
        <text>L-threonyl-[protein] + ATP = O-phospho-L-threonyl-[protein] + ADP + H(+)</text>
        <dbReference type="Rhea" id="RHEA:46608"/>
        <dbReference type="Rhea" id="RHEA-COMP:11060"/>
        <dbReference type="Rhea" id="RHEA-COMP:11605"/>
        <dbReference type="ChEBI" id="CHEBI:15378"/>
        <dbReference type="ChEBI" id="CHEBI:30013"/>
        <dbReference type="ChEBI" id="CHEBI:30616"/>
        <dbReference type="ChEBI" id="CHEBI:61977"/>
        <dbReference type="ChEBI" id="CHEBI:456216"/>
        <dbReference type="EC" id="2.7.11.1"/>
    </reaction>
</comment>
<comment type="subcellular location">
    <subcellularLocation>
        <location evidence="6">Cell membrane</location>
        <topology evidence="6">Lipid-anchor</topology>
    </subcellularLocation>
</comment>
<comment type="similarity">
    <text evidence="5">Belongs to the protein kinase superfamily. Ser/Thr protein kinase family.</text>
</comment>
<comment type="sequence caution" evidence="5">
    <conflict type="erroneous gene model prediction">
        <sequence resource="EMBL-CDS" id="AAF78407"/>
    </conflict>
</comment>
<feature type="initiator methionine" description="Removed" evidence="2">
    <location>
        <position position="1"/>
    </location>
</feature>
<feature type="chain" id="PRO_0000443234" description="Serine/threonine-protein kinase BSK4">
    <location>
        <begin position="2"/>
        <end position="483"/>
    </location>
</feature>
<feature type="domain" description="Protein kinase" evidence="1">
    <location>
        <begin position="56"/>
        <end position="322"/>
    </location>
</feature>
<feature type="active site" description="Proton acceptor" evidence="1">
    <location>
        <position position="178"/>
    </location>
</feature>
<feature type="binding site" evidence="1">
    <location>
        <begin position="62"/>
        <end position="70"/>
    </location>
    <ligand>
        <name>ATP</name>
        <dbReference type="ChEBI" id="CHEBI:30616"/>
    </ligand>
</feature>
<feature type="binding site" evidence="1">
    <location>
        <position position="84"/>
    </location>
    <ligand>
        <name>ATP</name>
        <dbReference type="ChEBI" id="CHEBI:30616"/>
    </ligand>
</feature>
<feature type="lipid moiety-binding region" description="N-myristoyl glycine" evidence="2">
    <location>
        <position position="2"/>
    </location>
</feature>
<accession>F4HU55</accession>
<accession>Q9LQ82</accession>
<proteinExistence type="evidence at protein level"/>
<gene>
    <name evidence="4" type="primary">BSK4</name>
    <name evidence="7" type="ordered locus">At1g01740</name>
    <name evidence="8" type="ORF">T1N6.15</name>
</gene>
<name>BSK4_ARATH</name>
<organism>
    <name type="scientific">Arabidopsis thaliana</name>
    <name type="common">Mouse-ear cress</name>
    <dbReference type="NCBI Taxonomy" id="3702"/>
    <lineage>
        <taxon>Eukaryota</taxon>
        <taxon>Viridiplantae</taxon>
        <taxon>Streptophyta</taxon>
        <taxon>Embryophyta</taxon>
        <taxon>Tracheophyta</taxon>
        <taxon>Spermatophyta</taxon>
        <taxon>Magnoliopsida</taxon>
        <taxon>eudicotyledons</taxon>
        <taxon>Gunneridae</taxon>
        <taxon>Pentapetalae</taxon>
        <taxon>rosids</taxon>
        <taxon>malvids</taxon>
        <taxon>Brassicales</taxon>
        <taxon>Brassicaceae</taxon>
        <taxon>Camelineae</taxon>
        <taxon>Arabidopsis</taxon>
    </lineage>
</organism>
<dbReference type="EC" id="2.7.11.1" evidence="5"/>
<dbReference type="EMBL" id="AC009273">
    <property type="protein sequence ID" value="AAF78407.1"/>
    <property type="status" value="ALT_SEQ"/>
    <property type="molecule type" value="Genomic_DNA"/>
</dbReference>
<dbReference type="EMBL" id="CP002684">
    <property type="protein sequence ID" value="AEE27329.1"/>
    <property type="molecule type" value="Genomic_DNA"/>
</dbReference>
<dbReference type="EMBL" id="CP002684">
    <property type="protein sequence ID" value="AEE27330.1"/>
    <property type="molecule type" value="Genomic_DNA"/>
</dbReference>
<dbReference type="PIR" id="H86148">
    <property type="entry name" value="H86148"/>
</dbReference>
<dbReference type="RefSeq" id="NP_001184886.1">
    <property type="nucleotide sequence ID" value="NM_001197957.2"/>
</dbReference>
<dbReference type="RefSeq" id="NP_171679.1">
    <property type="nucleotide sequence ID" value="NM_100057.2"/>
</dbReference>
<dbReference type="SMR" id="F4HU55"/>
<dbReference type="FunCoup" id="F4HU55">
    <property type="interactions" value="310"/>
</dbReference>
<dbReference type="IntAct" id="F4HU55">
    <property type="interactions" value="2"/>
</dbReference>
<dbReference type="STRING" id="3702.F4HU55"/>
<dbReference type="iPTMnet" id="F4HU55"/>
<dbReference type="PaxDb" id="3702-AT1G01740.2"/>
<dbReference type="ProteomicsDB" id="240510"/>
<dbReference type="EnsemblPlants" id="AT1G01740.1">
    <property type="protein sequence ID" value="AT1G01740.1"/>
    <property type="gene ID" value="AT1G01740"/>
</dbReference>
<dbReference type="EnsemblPlants" id="AT1G01740.2">
    <property type="protein sequence ID" value="AT1G01740.2"/>
    <property type="gene ID" value="AT1G01740"/>
</dbReference>
<dbReference type="GeneID" id="839253"/>
<dbReference type="Gramene" id="AT1G01740.1">
    <property type="protein sequence ID" value="AT1G01740.1"/>
    <property type="gene ID" value="AT1G01740"/>
</dbReference>
<dbReference type="Gramene" id="AT1G01740.2">
    <property type="protein sequence ID" value="AT1G01740.2"/>
    <property type="gene ID" value="AT1G01740"/>
</dbReference>
<dbReference type="KEGG" id="ath:AT1G01740"/>
<dbReference type="Araport" id="AT1G01740"/>
<dbReference type="TAIR" id="AT1G01740">
    <property type="gene designation" value="BSK4"/>
</dbReference>
<dbReference type="eggNOG" id="ENOG502QSE9">
    <property type="taxonomic scope" value="Eukaryota"/>
</dbReference>
<dbReference type="HOGENOM" id="CLU_000288_15_0_1"/>
<dbReference type="InParanoid" id="F4HU55"/>
<dbReference type="PRO" id="PR:F4HU55"/>
<dbReference type="Proteomes" id="UP000006548">
    <property type="component" value="Chromosome 1"/>
</dbReference>
<dbReference type="ExpressionAtlas" id="F4HU55">
    <property type="expression patterns" value="baseline and differential"/>
</dbReference>
<dbReference type="GO" id="GO:0005576">
    <property type="term" value="C:extracellular region"/>
    <property type="evidence" value="ECO:0007005"/>
    <property type="project" value="TAIR"/>
</dbReference>
<dbReference type="GO" id="GO:0005886">
    <property type="term" value="C:plasma membrane"/>
    <property type="evidence" value="ECO:0007669"/>
    <property type="project" value="UniProtKB-SubCell"/>
</dbReference>
<dbReference type="GO" id="GO:0005524">
    <property type="term" value="F:ATP binding"/>
    <property type="evidence" value="ECO:0007669"/>
    <property type="project" value="UniProtKB-KW"/>
</dbReference>
<dbReference type="GO" id="GO:0106310">
    <property type="term" value="F:protein serine kinase activity"/>
    <property type="evidence" value="ECO:0007669"/>
    <property type="project" value="RHEA"/>
</dbReference>
<dbReference type="GO" id="GO:0004674">
    <property type="term" value="F:protein serine/threonine kinase activity"/>
    <property type="evidence" value="ECO:0007669"/>
    <property type="project" value="UniProtKB-KW"/>
</dbReference>
<dbReference type="GO" id="GO:0009742">
    <property type="term" value="P:brassinosteroid mediated signaling pathway"/>
    <property type="evidence" value="ECO:0000315"/>
    <property type="project" value="UniProtKB"/>
</dbReference>
<dbReference type="FunFam" id="3.30.200.20:FF:000154">
    <property type="entry name" value="probable serine/threonine-protein kinase At4g35230"/>
    <property type="match status" value="1"/>
</dbReference>
<dbReference type="FunFam" id="1.10.510.10:FF:000069">
    <property type="entry name" value="probable serine/threonine-protein kinase At5g41260"/>
    <property type="match status" value="1"/>
</dbReference>
<dbReference type="Gene3D" id="3.30.200.20">
    <property type="entry name" value="Phosphorylase Kinase, domain 1"/>
    <property type="match status" value="1"/>
</dbReference>
<dbReference type="Gene3D" id="1.25.40.10">
    <property type="entry name" value="Tetratricopeptide repeat domain"/>
    <property type="match status" value="1"/>
</dbReference>
<dbReference type="Gene3D" id="1.10.510.10">
    <property type="entry name" value="Transferase(Phosphotransferase) domain 1"/>
    <property type="match status" value="1"/>
</dbReference>
<dbReference type="InterPro" id="IPR045845">
    <property type="entry name" value="BSK"/>
</dbReference>
<dbReference type="InterPro" id="IPR011009">
    <property type="entry name" value="Kinase-like_dom_sf"/>
</dbReference>
<dbReference type="InterPro" id="IPR000719">
    <property type="entry name" value="Prot_kinase_dom"/>
</dbReference>
<dbReference type="InterPro" id="IPR001245">
    <property type="entry name" value="Ser-Thr/Tyr_kinase_cat_dom"/>
</dbReference>
<dbReference type="InterPro" id="IPR011990">
    <property type="entry name" value="TPR-like_helical_dom_sf"/>
</dbReference>
<dbReference type="PANTHER" id="PTHR45863">
    <property type="entry name" value="SERINE/THREONINE-PROTEIN KINASE BSK5"/>
    <property type="match status" value="1"/>
</dbReference>
<dbReference type="PANTHER" id="PTHR45863:SF13">
    <property type="entry name" value="SERINE_THREONINE-PROTEIN KINASE BSK4"/>
    <property type="match status" value="1"/>
</dbReference>
<dbReference type="Pfam" id="PF07714">
    <property type="entry name" value="PK_Tyr_Ser-Thr"/>
    <property type="match status" value="1"/>
</dbReference>
<dbReference type="SUPFAM" id="SSF56112">
    <property type="entry name" value="Protein kinase-like (PK-like)"/>
    <property type="match status" value="1"/>
</dbReference>
<dbReference type="SUPFAM" id="SSF48452">
    <property type="entry name" value="TPR-like"/>
    <property type="match status" value="1"/>
</dbReference>
<dbReference type="PROSITE" id="PS50011">
    <property type="entry name" value="PROTEIN_KINASE_DOM"/>
    <property type="match status" value="1"/>
</dbReference>
<sequence>MGGQSSKIGTCCSHKTTALEAPDVENKENGEVNGVHSFREYSLEQLKIATSCFALENVVSEHGETAPNVVYQGKLENHMKIAIKRFSGTAWPDPRQFLEEARLVGQLRSKRMANLLGYCCEGGERLLVAEFMPNETLAKHLFHWDTEPMKWAMRLRVALYISEALEYCSNNGHTLYHDLNAYRVLFDEECNPRLSTFGLMKNSRDGKSYSTNLAFTPPEYLRTGRITAESVIYSFGTLLLDLLTGKHIPPSHALDLIRDRNLQTLTDSCLEGQFSDSDGTELVRLTSCCLQYEARERPNIKSLVTALISLQKDTEVLSHVLMGLPQSGTFASPPSPFAEACSGKDLTSMVEILEKIGYKDDEDLSFMWTEQMQEAINSKKKGDIAFRRKDFSEAIEFYTQFLDLGMISATVLVRRSQSYLMSNMAKEALDDAMKAQGISPVWYVALYLQSAALSVLGMEKESQIALTEGSILEARKISASTQN</sequence>
<protein>
    <recommendedName>
        <fullName evidence="5">Serine/threonine-protein kinase BSK4</fullName>
        <ecNumber evidence="5">2.7.11.1</ecNumber>
    </recommendedName>
    <alternativeName>
        <fullName evidence="4">Brassinosteroid-signaling kinase 4</fullName>
    </alternativeName>
</protein>
<keyword id="KW-0067">ATP-binding</keyword>
<keyword id="KW-1070">Brassinosteroid signaling pathway</keyword>
<keyword id="KW-1003">Cell membrane</keyword>
<keyword id="KW-0418">Kinase</keyword>
<keyword id="KW-0449">Lipoprotein</keyword>
<keyword id="KW-0472">Membrane</keyword>
<keyword id="KW-0519">Myristate</keyword>
<keyword id="KW-0547">Nucleotide-binding</keyword>
<keyword id="KW-1185">Reference proteome</keyword>
<keyword id="KW-0723">Serine/threonine-protein kinase</keyword>
<keyword id="KW-0808">Transferase</keyword>